<keyword id="KW-0002">3D-structure</keyword>
<keyword id="KW-0007">Acetylation</keyword>
<keyword id="KW-0013">ADP-ribosylation</keyword>
<keyword id="KW-0158">Chromosome</keyword>
<keyword id="KW-0175">Coiled coil</keyword>
<keyword id="KW-0903">Direct protein sequencing</keyword>
<keyword id="KW-0227">DNA damage</keyword>
<keyword id="KW-0234">DNA repair</keyword>
<keyword id="KW-0235">DNA replication</keyword>
<keyword id="KW-0945">Host-virus interaction</keyword>
<keyword id="KW-0991">Intellectual disability</keyword>
<keyword id="KW-1017">Isopeptide bond</keyword>
<keyword id="KW-0539">Nucleus</keyword>
<keyword id="KW-0597">Phosphoprotein</keyword>
<keyword id="KW-1267">Proteomics identification</keyword>
<keyword id="KW-1185">Reference proteome</keyword>
<keyword id="KW-0804">Transcription</keyword>
<keyword id="KW-0805">Transcription regulation</keyword>
<keyword id="KW-0832">Ubl conjugation</keyword>
<proteinExistence type="evidence at protein level"/>
<accession>Q9Y5B9</accession>
<accession>Q6GMT8</accession>
<accession>Q6P2F1</accession>
<accession>Q6PJM1</accession>
<accession>Q9NRX0</accession>
<reference key="1">
    <citation type="journal article" date="1999" name="Nature">
        <title>The chromatin-specific transcription elongation factor FACT comprises human SPT16 and SSRP1 proteins.</title>
        <authorList>
            <person name="Orphanides G."/>
            <person name="Wu W.-H."/>
            <person name="Lane W.S."/>
            <person name="Hampsey M."/>
            <person name="Reinberg D."/>
        </authorList>
    </citation>
    <scope>NUCLEOTIDE SEQUENCE [MRNA]</scope>
    <scope>IDENTIFICATION BY MASS SPECTROMETRY</scope>
    <scope>SUBCELLULAR LOCATION</scope>
    <scope>INTERACTION WITH SSRP1; H2A AND H2B</scope>
</reference>
<reference key="2">
    <citation type="journal article" date="2004" name="Genome Res.">
        <title>The status, quality, and expansion of the NIH full-length cDNA project: the Mammalian Gene Collection (MGC).</title>
        <authorList>
            <consortium name="The MGC Project Team"/>
        </authorList>
    </citation>
    <scope>NUCLEOTIDE SEQUENCE [LARGE SCALE MRNA] OF 1-638</scope>
    <source>
        <tissue>Brain</tissue>
        <tissue>Eye</tissue>
        <tissue>Testis</tissue>
    </source>
</reference>
<reference key="3">
    <citation type="submission" date="2007-07" db="UniProtKB">
        <authorList>
            <person name="Bienvenut W.V."/>
            <person name="Boldt K."/>
            <person name="von Kriegsheim A.F."/>
            <person name="Kolch W."/>
        </authorList>
    </citation>
    <scope>PROTEIN SEQUENCE OF 2-12 AND 480-490</scope>
    <scope>CLEAVAGE OF INITIATOR METHIONINE</scope>
    <scope>ACETYLATION AT ALA-2</scope>
    <scope>IDENTIFICATION BY MASS SPECTROMETRY</scope>
    <source>
        <tissue>Hepatoma</tissue>
    </source>
</reference>
<reference key="4">
    <citation type="submission" date="2008-03" db="UniProtKB">
        <authorList>
            <person name="Bienvenut W.V."/>
            <person name="Vousden K.H."/>
            <person name="Lukashchuk N."/>
        </authorList>
    </citation>
    <scope>PROTEIN SEQUENCE OF 2-12; 93-108 AND 582-596</scope>
    <scope>CLEAVAGE OF INITIATOR METHIONINE</scope>
    <scope>ACETYLATION AT ALA-2</scope>
    <scope>IDENTIFICATION BY MASS SPECTROMETRY</scope>
    <source>
        <tissue>Lung carcinoma</tissue>
    </source>
</reference>
<reference key="5">
    <citation type="journal article" date="2000" name="Genes Cells">
        <title>Functional interaction of general transcription initiation factor TFIIE with general chromatin factor SPT16/CDC68.</title>
        <authorList>
            <person name="Kang S.-W."/>
            <person name="Kuzuhara T."/>
            <person name="Horikoshi M."/>
        </authorList>
    </citation>
    <scope>NUCLEOTIDE SEQUENCE [MRNA] OF 801-1047</scope>
    <scope>TISSUE SPECIFICITY</scope>
    <scope>INTERACTION WITH GTF2E2</scope>
</reference>
<reference key="6">
    <citation type="journal article" date="1998" name="Cell">
        <title>FACT, a factor that facilitates transcript elongation through nucleosomes.</title>
        <authorList>
            <person name="Orphanides G."/>
            <person name="LeRoy G."/>
            <person name="Chang C.-H."/>
            <person name="Luse D.S."/>
            <person name="Reinberg D."/>
        </authorList>
    </citation>
    <scope>FUNCTION</scope>
</reference>
<reference key="7">
    <citation type="journal article" date="1998" name="Science">
        <title>Requirement of RSF and FACT for transcription of chromatin templates in vitro.</title>
        <authorList>
            <person name="LeRoy G."/>
            <person name="Orphanides G."/>
            <person name="Lane W.S."/>
            <person name="Reinberg D."/>
        </authorList>
    </citation>
    <scope>FUNCTION</scope>
</reference>
<reference key="8">
    <citation type="journal article" date="2000" name="Mol. Cell">
        <title>FACT relieves DSIF/NELF-mediated inhibition of transcriptional elongation and reveals functional differences between P-TEFb and TFIIH.</title>
        <authorList>
            <person name="Wada T."/>
            <person name="Orphanides G."/>
            <person name="Hasegawa J."/>
            <person name="Kim D.-K."/>
            <person name="Shima D."/>
            <person name="Yamaguchi Y."/>
            <person name="Fukuda A."/>
            <person name="Hisatake K."/>
            <person name="Oh S."/>
            <person name="Reinberg D."/>
            <person name="Handa H."/>
        </authorList>
    </citation>
    <scope>FUNCTION</scope>
</reference>
<reference key="9">
    <citation type="journal article" date="2001" name="Mol. Cell">
        <title>A DNA damage-induced p53 serine 392 kinase complex contains CK2, hSpt16, and SSRP1.</title>
        <authorList>
            <person name="Keller D.M."/>
            <person name="Zeng X."/>
            <person name="Wang Y."/>
            <person name="Zhang Q.H."/>
            <person name="Kapoor M."/>
            <person name="Shu H."/>
            <person name="Goodman R."/>
            <person name="Lozano G."/>
            <person name="Zhao Y."/>
            <person name="Lu H."/>
        </authorList>
    </citation>
    <scope>FUNCTION</scope>
    <scope>INTERACTION WITH SSRP1; CSNK2A1; CSNK2A2 AND CSNK2B</scope>
</reference>
<reference key="10">
    <citation type="journal article" date="2002" name="J. Biol. Chem.">
        <title>p53 serine 392 phosphorylation increases after UV through induction of the assembly of the CK2.hSPT16.SSRP1 complex.</title>
        <authorList>
            <person name="Keller D.M."/>
            <person name="Lu H."/>
        </authorList>
    </citation>
    <scope>INTERACTION WITH SSRP1; CSNK2A1; CSNK2A2 AND CSNK2B</scope>
</reference>
<reference key="11">
    <citation type="journal article" date="2003" name="Science">
        <title>FACT facilitates transcription-dependent nucleosome alteration.</title>
        <authorList>
            <person name="Belotserkovskaya R."/>
            <person name="Oh S."/>
            <person name="Bondarenko V.A."/>
            <person name="Orphanides G."/>
            <person name="Studitsky V.M."/>
            <person name="Reinberg D."/>
        </authorList>
    </citation>
    <scope>FUNCTION</scope>
    <scope>DOMAIN</scope>
</reference>
<reference key="12">
    <citation type="journal article" date="2004" name="J. Biol. Chem.">
        <title>Nek9, a novel FACT-associated protein, modulates interphase progression.</title>
        <authorList>
            <person name="Tan B.C.-M."/>
            <person name="Lee S.-C."/>
        </authorList>
    </citation>
    <scope>INTERACTION WITH NEK9</scope>
</reference>
<reference key="13">
    <citation type="journal article" date="2006" name="Cell">
        <title>Histone H2B monoubiquitination functions cooperatively with FACT to regulate elongation by RNA polymerase II.</title>
        <authorList>
            <person name="Pavri R."/>
            <person name="Zhu B."/>
            <person name="Li G."/>
            <person name="Trojer P."/>
            <person name="Mandal S."/>
            <person name="Shilatifard A."/>
            <person name="Reinberg D."/>
        </authorList>
    </citation>
    <scope>FUNCTION</scope>
</reference>
<reference key="14">
    <citation type="journal article" date="2006" name="Cell">
        <title>Global, in vivo, and site-specific phosphorylation dynamics in signaling networks.</title>
        <authorList>
            <person name="Olsen J.V."/>
            <person name="Blagoev B."/>
            <person name="Gnad F."/>
            <person name="Macek B."/>
            <person name="Kumar C."/>
            <person name="Mortensen P."/>
            <person name="Mann M."/>
        </authorList>
    </citation>
    <scope>PHOSPHORYLATION [LARGE SCALE ANALYSIS] AT SER-979 AND SER-982</scope>
    <scope>IDENTIFICATION BY MASS SPECTROMETRY [LARGE SCALE ANALYSIS]</scope>
    <source>
        <tissue>Cervix carcinoma</tissue>
    </source>
</reference>
<reference key="15">
    <citation type="journal article" date="2006" name="Nucleic Acids Res.">
        <title>Modulation of nucleosome-binding activity of FACT by poly(ADP-ribosyl)ation.</title>
        <authorList>
            <person name="Huang J.-Y."/>
            <person name="Chen W.-H."/>
            <person name="Chang Y.-L."/>
            <person name="Wang H.-T."/>
            <person name="Chuang W.-T."/>
            <person name="Lee S.-C."/>
        </authorList>
    </citation>
    <scope>ADP-RIBOSYLATION</scope>
</reference>
<reference key="16">
    <citation type="journal article" date="2008" name="Proc. Natl. Acad. Sci. U.S.A.">
        <title>A quantitative atlas of mitotic phosphorylation.</title>
        <authorList>
            <person name="Dephoure N."/>
            <person name="Zhou C."/>
            <person name="Villen J."/>
            <person name="Beausoleil S.A."/>
            <person name="Bakalarski C.E."/>
            <person name="Elledge S.J."/>
            <person name="Gygi S.P."/>
        </authorList>
    </citation>
    <scope>PHOSPHORYLATION [LARGE SCALE ANALYSIS] AT SER-508 AND SER-1015</scope>
    <scope>IDENTIFICATION BY MASS SPECTROMETRY [LARGE SCALE ANALYSIS]</scope>
    <source>
        <tissue>Cervix carcinoma</tissue>
    </source>
</reference>
<reference key="17">
    <citation type="journal article" date="2009" name="Anal. Chem.">
        <title>Lys-N and trypsin cover complementary parts of the phosphoproteome in a refined SCX-based approach.</title>
        <authorList>
            <person name="Gauci S."/>
            <person name="Helbig A.O."/>
            <person name="Slijper M."/>
            <person name="Krijgsveld J."/>
            <person name="Heck A.J."/>
            <person name="Mohammed S."/>
        </authorList>
    </citation>
    <scope>IDENTIFICATION BY MASS SPECTROMETRY [LARGE SCALE ANALYSIS]</scope>
</reference>
<reference key="18">
    <citation type="journal article" date="2009" name="Science">
        <title>Lysine acetylation targets protein complexes and co-regulates major cellular functions.</title>
        <authorList>
            <person name="Choudhary C."/>
            <person name="Kumar C."/>
            <person name="Gnad F."/>
            <person name="Nielsen M.L."/>
            <person name="Rehman M."/>
            <person name="Walther T.C."/>
            <person name="Olsen J.V."/>
            <person name="Mann M."/>
        </authorList>
    </citation>
    <scope>ACETYLATION [LARGE SCALE ANALYSIS] AT LYS-139; LYS-196; LYS-223; LYS-513; LYS-732; LYS-786 AND LYS-904</scope>
    <scope>IDENTIFICATION BY MASS SPECTROMETRY [LARGE SCALE ANALYSIS]</scope>
</reference>
<reference key="19">
    <citation type="journal article" date="2010" name="Sci. Signal.">
        <title>Quantitative phosphoproteomics reveals widespread full phosphorylation site occupancy during mitosis.</title>
        <authorList>
            <person name="Olsen J.V."/>
            <person name="Vermeulen M."/>
            <person name="Santamaria A."/>
            <person name="Kumar C."/>
            <person name="Miller M.L."/>
            <person name="Jensen L.J."/>
            <person name="Gnad F."/>
            <person name="Cox J."/>
            <person name="Jensen T.S."/>
            <person name="Nigg E.A."/>
            <person name="Brunak S."/>
            <person name="Mann M."/>
        </authorList>
    </citation>
    <scope>PHOSPHORYLATION [LARGE SCALE ANALYSIS] AT SER-650; THR-903; SER-979 AND SER-982</scope>
    <scope>IDENTIFICATION BY MASS SPECTROMETRY [LARGE SCALE ANALYSIS]</scope>
    <source>
        <tissue>Cervix carcinoma</tissue>
    </source>
</reference>
<reference key="20">
    <citation type="journal article" date="2011" name="BMC Syst. Biol.">
        <title>Initial characterization of the human central proteome.</title>
        <authorList>
            <person name="Burkard T.R."/>
            <person name="Planyavsky M."/>
            <person name="Kaupe I."/>
            <person name="Breitwieser F.P."/>
            <person name="Buerckstuemmer T."/>
            <person name="Bennett K.L."/>
            <person name="Superti-Furga G."/>
            <person name="Colinge J."/>
        </authorList>
    </citation>
    <scope>IDENTIFICATION BY MASS SPECTROMETRY [LARGE SCALE ANALYSIS]</scope>
</reference>
<reference key="21">
    <citation type="journal article" date="2011" name="Sci. Signal.">
        <title>System-wide temporal characterization of the proteome and phosphoproteome of human embryonic stem cell differentiation.</title>
        <authorList>
            <person name="Rigbolt K.T."/>
            <person name="Prokhorova T.A."/>
            <person name="Akimov V."/>
            <person name="Henningsen J."/>
            <person name="Johansen P.T."/>
            <person name="Kratchmarova I."/>
            <person name="Kassem M."/>
            <person name="Mann M."/>
            <person name="Olsen J.V."/>
            <person name="Blagoev B."/>
        </authorList>
    </citation>
    <scope>PHOSPHORYLATION [LARGE SCALE ANALYSIS] AT SER-188; SER-650; SER-979; SER-982 AND SER-986</scope>
    <scope>IDENTIFICATION BY MASS SPECTROMETRY [LARGE SCALE ANALYSIS]</scope>
</reference>
<reference key="22">
    <citation type="journal article" date="2012" name="Mol. Cell. Proteomics">
        <title>Comparative large-scale characterisation of plant vs. mammal proteins reveals similar and idiosyncratic N-alpha acetylation features.</title>
        <authorList>
            <person name="Bienvenut W.V."/>
            <person name="Sumpton D."/>
            <person name="Martinez A."/>
            <person name="Lilla S."/>
            <person name="Espagne C."/>
            <person name="Meinnel T."/>
            <person name="Giglione C."/>
        </authorList>
    </citation>
    <scope>ACETYLATION [LARGE SCALE ANALYSIS] AT ALA-2</scope>
    <scope>CLEAVAGE OF INITIATOR METHIONINE [LARGE SCALE ANALYSIS]</scope>
    <scope>IDENTIFICATION BY MASS SPECTROMETRY [LARGE SCALE ANALYSIS]</scope>
</reference>
<reference key="23">
    <citation type="journal article" date="2012" name="Proc. Natl. Acad. Sci. U.S.A.">
        <title>N-terminal acetylome analyses and functional insights of the N-terminal acetyltransferase NatB.</title>
        <authorList>
            <person name="Van Damme P."/>
            <person name="Lasa M."/>
            <person name="Polevoda B."/>
            <person name="Gazquez C."/>
            <person name="Elosegui-Artola A."/>
            <person name="Kim D.S."/>
            <person name="De Juan-Pardo E."/>
            <person name="Demeyer K."/>
            <person name="Hole K."/>
            <person name="Larrea E."/>
            <person name="Timmerman E."/>
            <person name="Prieto J."/>
            <person name="Arnesen T."/>
            <person name="Sherman F."/>
            <person name="Gevaert K."/>
            <person name="Aldabe R."/>
        </authorList>
    </citation>
    <scope>ACETYLATION [LARGE SCALE ANALYSIS] AT ALA-2</scope>
    <scope>CLEAVAGE OF INITIATOR METHIONINE [LARGE SCALE ANALYSIS]</scope>
    <scope>IDENTIFICATION BY MASS SPECTROMETRY [LARGE SCALE ANALYSIS]</scope>
</reference>
<reference key="24">
    <citation type="journal article" date="2013" name="J. Proteome Res.">
        <title>Toward a comprehensive characterization of a human cancer cell phosphoproteome.</title>
        <authorList>
            <person name="Zhou H."/>
            <person name="Di Palma S."/>
            <person name="Preisinger C."/>
            <person name="Peng M."/>
            <person name="Polat A.N."/>
            <person name="Heck A.J."/>
            <person name="Mohammed S."/>
        </authorList>
    </citation>
    <scope>PHOSPHORYLATION [LARGE SCALE ANALYSIS] AT SER-188; SER-455; SER-508; SER-650; SER-658; THR-903; SER-982 AND SER-1015</scope>
    <scope>IDENTIFICATION BY MASS SPECTROMETRY [LARGE SCALE ANALYSIS]</scope>
    <source>
        <tissue>Cervix carcinoma</tissue>
        <tissue>Erythroleukemia</tissue>
    </source>
</reference>
<reference key="25">
    <citation type="journal article" date="2014" name="Nat. Struct. Mol. Biol.">
        <title>Uncovering global SUMOylation signaling networks in a site-specific manner.</title>
        <authorList>
            <person name="Hendriks I.A."/>
            <person name="D'Souza R.C."/>
            <person name="Yang B."/>
            <person name="Verlaan-de Vries M."/>
            <person name="Mann M."/>
            <person name="Vertegaal A.C."/>
        </authorList>
    </citation>
    <scope>SUMOYLATION [LARGE SCALE ANALYSIS] AT LYS-647</scope>
    <scope>IDENTIFICATION BY MASS SPECTROMETRY [LARGE SCALE ANALYSIS]</scope>
</reference>
<reference key="26">
    <citation type="journal article" date="2015" name="Cell Rep.">
        <title>SUMO-2 orchestrates chromatin modifiers in response to DNA damage.</title>
        <authorList>
            <person name="Hendriks I.A."/>
            <person name="Treffers L.W."/>
            <person name="Verlaan-de Vries M."/>
            <person name="Olsen J.V."/>
            <person name="Vertegaal A.C."/>
        </authorList>
    </citation>
    <scope>SUMOYLATION [LARGE SCALE ANALYSIS] AT LYS-647</scope>
    <scope>IDENTIFICATION BY MASS SPECTROMETRY [LARGE SCALE ANALYSIS]</scope>
</reference>
<reference key="27">
    <citation type="journal article" date="2016" name="Mol. Cell">
        <title>The flexible ends of CENP-A nucleosome are required for mitotic fidelity.</title>
        <authorList>
            <person name="Roulland Y."/>
            <person name="Ouararhni K."/>
            <person name="Naidenov M."/>
            <person name="Ramos L."/>
            <person name="Shuaib M."/>
            <person name="Syed S.H."/>
            <person name="Lone I.N."/>
            <person name="Boopathi R."/>
            <person name="Fontaine E."/>
            <person name="Papai G."/>
            <person name="Tachiwana H."/>
            <person name="Gautier T."/>
            <person name="Skoufias D."/>
            <person name="Padmanabhan K."/>
            <person name="Bednar J."/>
            <person name="Kurumizaka H."/>
            <person name="Schultz P."/>
            <person name="Angelov D."/>
            <person name="Hamiche A."/>
            <person name="Dimitrov S."/>
        </authorList>
    </citation>
    <scope>SUBUNIT</scope>
</reference>
<reference key="28">
    <citation type="journal article" date="2017" name="MBio">
        <title>A Herpesviral Immediate Early Protein Promotes Transcription Elongation of Viral Transcripts.</title>
        <authorList>
            <person name="Fox H.L."/>
            <person name="Dembowski J.A."/>
            <person name="DeLuca N.A."/>
        </authorList>
    </citation>
    <scope>INTERACTION WITH HERPES SIMPLEX VIRUS 1 PROTEIN ICP22</scope>
</reference>
<reference key="29">
    <citation type="journal article" date="2017" name="Nat. Struct. Mol. Biol.">
        <title>Site-specific mapping of the human SUMO proteome reveals co-modification with phosphorylation.</title>
        <authorList>
            <person name="Hendriks I.A."/>
            <person name="Lyon D."/>
            <person name="Young C."/>
            <person name="Jensen L.J."/>
            <person name="Vertegaal A.C."/>
            <person name="Nielsen M.L."/>
        </authorList>
    </citation>
    <scope>SUMOYLATION [LARGE SCALE ANALYSIS] AT LYS-497; LYS-513 AND LYS-647</scope>
    <scope>IDENTIFICATION BY MASS SPECTROMETRY [LARGE SCALE ANALYSIS]</scope>
</reference>
<reference key="30">
    <citation type="journal article" date="2020" name="J. Med. Genet.">
        <title>De novo variants in SUPT16H cause neurodevelopmental disorders associated with corpus callosum abnormalities.</title>
        <authorList>
            <person name="Bina R."/>
            <person name="Matalon D."/>
            <person name="Fregeau B."/>
            <person name="Tarsitano J.J."/>
            <person name="Aukrust I."/>
            <person name="Houge G."/>
            <person name="Bend R."/>
            <person name="Warren H."/>
            <person name="Stevenson R.E."/>
            <person name="Stuurman K.E."/>
            <person name="Barkovich A.J."/>
            <person name="Sherr E.H."/>
        </authorList>
    </citation>
    <scope>VARIANTS NEDDFAC VAL-162; PRO-432; SER-571 AND TRP-734</scope>
    <scope>INVOLVEMENT IN NEDDFAC</scope>
</reference>
<gene>
    <name type="primary">SUPT16H</name>
    <name type="synonym">FACT140</name>
    <name type="synonym">FACTP140</name>
</gene>
<evidence type="ECO:0000250" key="1">
    <source>
        <dbReference type="UniProtKB" id="Q920B9"/>
    </source>
</evidence>
<evidence type="ECO:0000255" key="2"/>
<evidence type="ECO:0000256" key="3">
    <source>
        <dbReference type="SAM" id="MobiDB-lite"/>
    </source>
</evidence>
<evidence type="ECO:0000269" key="4">
    <source>
    </source>
</evidence>
<evidence type="ECO:0000269" key="5">
    <source>
    </source>
</evidence>
<evidence type="ECO:0000269" key="6">
    <source>
    </source>
</evidence>
<evidence type="ECO:0000269" key="7">
    <source>
    </source>
</evidence>
<evidence type="ECO:0000269" key="8">
    <source>
    </source>
</evidence>
<evidence type="ECO:0000269" key="9">
    <source>
    </source>
</evidence>
<evidence type="ECO:0000269" key="10">
    <source>
    </source>
</evidence>
<evidence type="ECO:0000269" key="11">
    <source>
    </source>
</evidence>
<evidence type="ECO:0000269" key="12">
    <source>
    </source>
</evidence>
<evidence type="ECO:0000269" key="13">
    <source>
    </source>
</evidence>
<evidence type="ECO:0000269" key="14">
    <source>
    </source>
</evidence>
<evidence type="ECO:0000269" key="15">
    <source>
    </source>
</evidence>
<evidence type="ECO:0000269" key="16">
    <source>
    </source>
</evidence>
<evidence type="ECO:0000269" key="17">
    <source ref="3"/>
</evidence>
<evidence type="ECO:0000269" key="18">
    <source ref="4"/>
</evidence>
<evidence type="ECO:0000305" key="19"/>
<evidence type="ECO:0007744" key="20">
    <source>
    </source>
</evidence>
<evidence type="ECO:0007744" key="21">
    <source>
    </source>
</evidence>
<evidence type="ECO:0007744" key="22">
    <source>
    </source>
</evidence>
<evidence type="ECO:0007744" key="23">
    <source>
    </source>
</evidence>
<evidence type="ECO:0007744" key="24">
    <source>
    </source>
</evidence>
<evidence type="ECO:0007744" key="25">
    <source>
    </source>
</evidence>
<evidence type="ECO:0007744" key="26">
    <source>
    </source>
</evidence>
<evidence type="ECO:0007744" key="27">
    <source>
    </source>
</evidence>
<evidence type="ECO:0007744" key="28">
    <source>
    </source>
</evidence>
<evidence type="ECO:0007744" key="29">
    <source>
    </source>
</evidence>
<evidence type="ECO:0007744" key="30">
    <source>
    </source>
</evidence>
<evidence type="ECO:0007829" key="31">
    <source>
        <dbReference type="PDB" id="4Z2M"/>
    </source>
</evidence>
<evidence type="ECO:0007829" key="32">
    <source>
        <dbReference type="PDB" id="4Z2N"/>
    </source>
</evidence>
<evidence type="ECO:0007829" key="33">
    <source>
        <dbReference type="PDB" id="5E5B"/>
    </source>
</evidence>
<evidence type="ECO:0007829" key="34">
    <source>
        <dbReference type="PDB" id="5UMT"/>
    </source>
</evidence>
<evidence type="ECO:0007829" key="35">
    <source>
        <dbReference type="PDB" id="5UMU"/>
    </source>
</evidence>
<evidence type="ECO:0007829" key="36">
    <source>
        <dbReference type="PDB" id="8I17"/>
    </source>
</evidence>
<dbReference type="EMBL" id="AF152961">
    <property type="protein sequence ID" value="AAD43978.1"/>
    <property type="molecule type" value="mRNA"/>
</dbReference>
<dbReference type="EMBL" id="BC000565">
    <property type="protein sequence ID" value="AAH00565.1"/>
    <property type="molecule type" value="mRNA"/>
</dbReference>
<dbReference type="EMBL" id="BC014046">
    <property type="protein sequence ID" value="AAH14046.1"/>
    <property type="molecule type" value="mRNA"/>
</dbReference>
<dbReference type="EMBL" id="BC064561">
    <property type="protein sequence ID" value="AAH64561.1"/>
    <property type="status" value="ALT_SEQ"/>
    <property type="molecule type" value="mRNA"/>
</dbReference>
<dbReference type="EMBL" id="BC073849">
    <property type="protein sequence ID" value="AAH73849.1"/>
    <property type="status" value="ALT_SEQ"/>
    <property type="molecule type" value="mRNA"/>
</dbReference>
<dbReference type="EMBL" id="AF164924">
    <property type="protein sequence ID" value="AAF28231.1"/>
    <property type="molecule type" value="mRNA"/>
</dbReference>
<dbReference type="CCDS" id="CCDS9569.1"/>
<dbReference type="RefSeq" id="NP_009123.1">
    <property type="nucleotide sequence ID" value="NM_007192.4"/>
</dbReference>
<dbReference type="PDB" id="4Z2M">
    <property type="method" value="X-ray"/>
    <property type="resolution" value="2.98 A"/>
    <property type="chains" value="B=644-930"/>
</dbReference>
<dbReference type="PDB" id="4Z2N">
    <property type="method" value="X-ray"/>
    <property type="resolution" value="1.92 A"/>
    <property type="chains" value="A=644-930"/>
</dbReference>
<dbReference type="PDB" id="5E5B">
    <property type="method" value="X-ray"/>
    <property type="resolution" value="1.84 A"/>
    <property type="chains" value="A=2-432"/>
</dbReference>
<dbReference type="PDB" id="5UMT">
    <property type="method" value="X-ray"/>
    <property type="resolution" value="2.09 A"/>
    <property type="chains" value="A=1-434"/>
</dbReference>
<dbReference type="PDB" id="5UMU">
    <property type="method" value="X-ray"/>
    <property type="resolution" value="1.90 A"/>
    <property type="chains" value="A/B=649-926"/>
</dbReference>
<dbReference type="PDB" id="5XM2">
    <property type="method" value="X-ray"/>
    <property type="resolution" value="2.19 A"/>
    <property type="chains" value="A/B=1-437"/>
</dbReference>
<dbReference type="PDB" id="6UPK">
    <property type="method" value="EM"/>
    <property type="resolution" value="4.90 A"/>
    <property type="chains" value="G=2-925"/>
</dbReference>
<dbReference type="PDB" id="6UPL">
    <property type="method" value="EM"/>
    <property type="resolution" value="7.40 A"/>
    <property type="chains" value="G=2-925"/>
</dbReference>
<dbReference type="PDB" id="8I17">
    <property type="method" value="X-ray"/>
    <property type="resolution" value="1.98 A"/>
    <property type="chains" value="C/F/I=926-965"/>
</dbReference>
<dbReference type="PDB" id="8YJF">
    <property type="method" value="X-ray"/>
    <property type="resolution" value="4.40 A"/>
    <property type="chains" value="A=644-988"/>
</dbReference>
<dbReference type="PDB" id="8YJM">
    <property type="method" value="X-ray"/>
    <property type="resolution" value="4.15 A"/>
    <property type="chains" value="A=644-988"/>
</dbReference>
<dbReference type="PDB" id="9EH2">
    <property type="method" value="EM"/>
    <property type="resolution" value="3.10 A"/>
    <property type="chains" value="x=1-1047"/>
</dbReference>
<dbReference type="PDBsum" id="4Z2M"/>
<dbReference type="PDBsum" id="4Z2N"/>
<dbReference type="PDBsum" id="5E5B"/>
<dbReference type="PDBsum" id="5UMT"/>
<dbReference type="PDBsum" id="5UMU"/>
<dbReference type="PDBsum" id="5XM2"/>
<dbReference type="PDBsum" id="6UPK"/>
<dbReference type="PDBsum" id="6UPL"/>
<dbReference type="PDBsum" id="8I17"/>
<dbReference type="PDBsum" id="8YJF"/>
<dbReference type="PDBsum" id="8YJM"/>
<dbReference type="PDBsum" id="9EH2"/>
<dbReference type="EMDB" id="EMD-20840"/>
<dbReference type="EMDB" id="EMD-20841"/>
<dbReference type="EMDB" id="EMD-48044"/>
<dbReference type="SMR" id="Q9Y5B9"/>
<dbReference type="BioGRID" id="116367">
    <property type="interactions" value="470"/>
</dbReference>
<dbReference type="ComplexPortal" id="CPX-419">
    <property type="entry name" value="FACT complex"/>
</dbReference>
<dbReference type="CORUM" id="Q9Y5B9"/>
<dbReference type="DIP" id="DIP-42757N"/>
<dbReference type="FunCoup" id="Q9Y5B9">
    <property type="interactions" value="4807"/>
</dbReference>
<dbReference type="IntAct" id="Q9Y5B9">
    <property type="interactions" value="188"/>
</dbReference>
<dbReference type="MINT" id="Q9Y5B9"/>
<dbReference type="STRING" id="9606.ENSP00000216297"/>
<dbReference type="ChEMBL" id="CHEMBL5465367"/>
<dbReference type="MEROPS" id="M24.974"/>
<dbReference type="GlyCosmos" id="Q9Y5B9">
    <property type="glycosylation" value="1 site, 2 glycans"/>
</dbReference>
<dbReference type="GlyGen" id="Q9Y5B9">
    <property type="glycosylation" value="4 sites, 2 O-linked glycans (4 sites)"/>
</dbReference>
<dbReference type="iPTMnet" id="Q9Y5B9"/>
<dbReference type="MetOSite" id="Q9Y5B9"/>
<dbReference type="PhosphoSitePlus" id="Q9Y5B9"/>
<dbReference type="SwissPalm" id="Q9Y5B9"/>
<dbReference type="BioMuta" id="SUPT16H"/>
<dbReference type="DMDM" id="74753511"/>
<dbReference type="jPOST" id="Q9Y5B9"/>
<dbReference type="MassIVE" id="Q9Y5B9"/>
<dbReference type="PaxDb" id="9606-ENSP00000216297"/>
<dbReference type="PeptideAtlas" id="Q9Y5B9"/>
<dbReference type="ProteomicsDB" id="86338"/>
<dbReference type="Pumba" id="Q9Y5B9"/>
<dbReference type="Antibodypedia" id="22129">
    <property type="antibodies" value="437 antibodies from 40 providers"/>
</dbReference>
<dbReference type="DNASU" id="11198"/>
<dbReference type="Ensembl" id="ENST00000216297.7">
    <property type="protein sequence ID" value="ENSP00000216297.2"/>
    <property type="gene ID" value="ENSG00000092201.10"/>
</dbReference>
<dbReference type="GeneID" id="11198"/>
<dbReference type="KEGG" id="hsa:11198"/>
<dbReference type="MANE-Select" id="ENST00000216297.7">
    <property type="protein sequence ID" value="ENSP00000216297.2"/>
    <property type="RefSeq nucleotide sequence ID" value="NM_007192.4"/>
    <property type="RefSeq protein sequence ID" value="NP_009123.1"/>
</dbReference>
<dbReference type="UCSC" id="uc001wao.2">
    <property type="organism name" value="human"/>
</dbReference>
<dbReference type="AGR" id="HGNC:11465"/>
<dbReference type="CTD" id="11198"/>
<dbReference type="DisGeNET" id="11198"/>
<dbReference type="GeneCards" id="SUPT16H"/>
<dbReference type="HGNC" id="HGNC:11465">
    <property type="gene designation" value="SUPT16H"/>
</dbReference>
<dbReference type="HPA" id="ENSG00000092201">
    <property type="expression patterns" value="Low tissue specificity"/>
</dbReference>
<dbReference type="MalaCards" id="SUPT16H"/>
<dbReference type="MIM" id="605012">
    <property type="type" value="gene"/>
</dbReference>
<dbReference type="MIM" id="619480">
    <property type="type" value="phenotype"/>
</dbReference>
<dbReference type="neXtProt" id="NX_Q9Y5B9"/>
<dbReference type="OpenTargets" id="ENSG00000092201"/>
<dbReference type="Orphanet" id="261229">
    <property type="disease" value="14q11.2 microduplication syndrome"/>
</dbReference>
<dbReference type="PharmGKB" id="PA36251"/>
<dbReference type="VEuPathDB" id="HostDB:ENSG00000092201"/>
<dbReference type="eggNOG" id="KOG1189">
    <property type="taxonomic scope" value="Eukaryota"/>
</dbReference>
<dbReference type="GeneTree" id="ENSGT00390000014495"/>
<dbReference type="HOGENOM" id="CLU_004627_0_0_1"/>
<dbReference type="InParanoid" id="Q9Y5B9"/>
<dbReference type="OMA" id="YHINTIP"/>
<dbReference type="OrthoDB" id="10251642at2759"/>
<dbReference type="PAN-GO" id="Q9Y5B9">
    <property type="GO annotations" value="5 GO annotations based on evolutionary models"/>
</dbReference>
<dbReference type="PhylomeDB" id="Q9Y5B9"/>
<dbReference type="TreeFam" id="TF300341"/>
<dbReference type="PathwayCommons" id="Q9Y5B9"/>
<dbReference type="Reactome" id="R-HSA-112382">
    <property type="pathway name" value="Formation of RNA Pol II elongation complex"/>
</dbReference>
<dbReference type="Reactome" id="R-HSA-167152">
    <property type="pathway name" value="Formation of HIV elongation complex in the absence of HIV Tat"/>
</dbReference>
<dbReference type="Reactome" id="R-HSA-167200">
    <property type="pathway name" value="Formation of HIV-1 elongation complex containing HIV-1 Tat"/>
</dbReference>
<dbReference type="Reactome" id="R-HSA-167238">
    <property type="pathway name" value="Pausing and recovery of Tat-mediated HIV elongation"/>
</dbReference>
<dbReference type="Reactome" id="R-HSA-167243">
    <property type="pathway name" value="Tat-mediated HIV elongation arrest and recovery"/>
</dbReference>
<dbReference type="Reactome" id="R-HSA-167246">
    <property type="pathway name" value="Tat-mediated elongation of the HIV-1 transcript"/>
</dbReference>
<dbReference type="Reactome" id="R-HSA-167287">
    <property type="pathway name" value="HIV elongation arrest and recovery"/>
</dbReference>
<dbReference type="Reactome" id="R-HSA-167290">
    <property type="pathway name" value="Pausing and recovery of HIV elongation"/>
</dbReference>
<dbReference type="Reactome" id="R-HSA-674695">
    <property type="pathway name" value="RNA Polymerase II Pre-transcription Events"/>
</dbReference>
<dbReference type="Reactome" id="R-HSA-6796648">
    <property type="pathway name" value="TP53 Regulates Transcription of DNA Repair Genes"/>
</dbReference>
<dbReference type="Reactome" id="R-HSA-6804756">
    <property type="pathway name" value="Regulation of TP53 Activity through Phosphorylation"/>
</dbReference>
<dbReference type="Reactome" id="R-HSA-75955">
    <property type="pathway name" value="RNA Polymerase II Transcription Elongation"/>
</dbReference>
<dbReference type="SignaLink" id="Q9Y5B9"/>
<dbReference type="BioGRID-ORCS" id="11198">
    <property type="hits" value="799 hits in 1141 CRISPR screens"/>
</dbReference>
<dbReference type="CD-CODE" id="91857CE7">
    <property type="entry name" value="Nucleolus"/>
</dbReference>
<dbReference type="ChiTaRS" id="SUPT16H">
    <property type="organism name" value="human"/>
</dbReference>
<dbReference type="EvolutionaryTrace" id="Q9Y5B9"/>
<dbReference type="GeneWiki" id="SUPT16H"/>
<dbReference type="GenomeRNAi" id="11198"/>
<dbReference type="Pharos" id="Q9Y5B9">
    <property type="development level" value="Tbio"/>
</dbReference>
<dbReference type="PRO" id="PR:Q9Y5B9"/>
<dbReference type="Proteomes" id="UP000005640">
    <property type="component" value="Chromosome 14"/>
</dbReference>
<dbReference type="RNAct" id="Q9Y5B9">
    <property type="molecule type" value="protein"/>
</dbReference>
<dbReference type="Bgee" id="ENSG00000092201">
    <property type="expression patterns" value="Expressed in ventricular zone and 132 other cell types or tissues"/>
</dbReference>
<dbReference type="ExpressionAtlas" id="Q9Y5B9">
    <property type="expression patterns" value="baseline and differential"/>
</dbReference>
<dbReference type="GO" id="GO:0035101">
    <property type="term" value="C:FACT complex"/>
    <property type="evidence" value="ECO:0000353"/>
    <property type="project" value="ComplexPortal"/>
</dbReference>
<dbReference type="GO" id="GO:0005654">
    <property type="term" value="C:nucleoplasm"/>
    <property type="evidence" value="ECO:0000314"/>
    <property type="project" value="HPA"/>
</dbReference>
<dbReference type="GO" id="GO:0005634">
    <property type="term" value="C:nucleus"/>
    <property type="evidence" value="ECO:0000314"/>
    <property type="project" value="ComplexPortal"/>
</dbReference>
<dbReference type="GO" id="GO:0031491">
    <property type="term" value="F:nucleosome binding"/>
    <property type="evidence" value="ECO:0000318"/>
    <property type="project" value="GO_Central"/>
</dbReference>
<dbReference type="GO" id="GO:0003723">
    <property type="term" value="F:RNA binding"/>
    <property type="evidence" value="ECO:0007005"/>
    <property type="project" value="UniProtKB"/>
</dbReference>
<dbReference type="GO" id="GO:0006281">
    <property type="term" value="P:DNA repair"/>
    <property type="evidence" value="ECO:0007669"/>
    <property type="project" value="UniProtKB-KW"/>
</dbReference>
<dbReference type="GO" id="GO:0006260">
    <property type="term" value="P:DNA replication"/>
    <property type="evidence" value="ECO:0007669"/>
    <property type="project" value="UniProtKB-KW"/>
</dbReference>
<dbReference type="GO" id="GO:0006334">
    <property type="term" value="P:nucleosome assembly"/>
    <property type="evidence" value="ECO:0000303"/>
    <property type="project" value="ComplexPortal"/>
</dbReference>
<dbReference type="GO" id="GO:0006337">
    <property type="term" value="P:nucleosome disassembly"/>
    <property type="evidence" value="ECO:0000314"/>
    <property type="project" value="ComplexPortal"/>
</dbReference>
<dbReference type="GO" id="GO:0032786">
    <property type="term" value="P:positive regulation of DNA-templated transcription, elongation"/>
    <property type="evidence" value="ECO:0000304"/>
    <property type="project" value="ProtInc"/>
</dbReference>
<dbReference type="GO" id="GO:0006366">
    <property type="term" value="P:transcription by RNA polymerase II"/>
    <property type="evidence" value="ECO:0000304"/>
    <property type="project" value="ProtInc"/>
</dbReference>
<dbReference type="GO" id="GO:0006368">
    <property type="term" value="P:transcription elongation by RNA polymerase II"/>
    <property type="evidence" value="ECO:0000318"/>
    <property type="project" value="GO_Central"/>
</dbReference>
<dbReference type="CDD" id="cd01091">
    <property type="entry name" value="CDC68-like"/>
    <property type="match status" value="1"/>
</dbReference>
<dbReference type="FunFam" id="2.30.29.150:FF:000003">
    <property type="entry name" value="FACT complex subunit SPT16"/>
    <property type="match status" value="1"/>
</dbReference>
<dbReference type="FunFam" id="2.30.29.30:FF:000017">
    <property type="entry name" value="FACT complex subunit SPT16"/>
    <property type="match status" value="1"/>
</dbReference>
<dbReference type="FunFam" id="2.30.29.210:FF:000001">
    <property type="entry name" value="FACT complex subunit spt16"/>
    <property type="match status" value="1"/>
</dbReference>
<dbReference type="FunFam" id="3.90.230.10:FF:000005">
    <property type="entry name" value="FACT complex subunit spt16"/>
    <property type="match status" value="1"/>
</dbReference>
<dbReference type="FunFam" id="3.40.350.10:FF:000005">
    <property type="entry name" value="SPT16 homolog, facilitates chromatin-remodeling subunit"/>
    <property type="match status" value="1"/>
</dbReference>
<dbReference type="Gene3D" id="2.30.29.150">
    <property type="match status" value="1"/>
</dbReference>
<dbReference type="Gene3D" id="3.90.230.10">
    <property type="entry name" value="Creatinase/methionine aminopeptidase superfamily"/>
    <property type="match status" value="1"/>
</dbReference>
<dbReference type="Gene3D" id="3.40.350.10">
    <property type="entry name" value="Creatinase/prolidase N-terminal domain"/>
    <property type="match status" value="1"/>
</dbReference>
<dbReference type="Gene3D" id="2.30.29.210">
    <property type="entry name" value="FACT complex subunit Spt16p/Cdc68p"/>
    <property type="match status" value="1"/>
</dbReference>
<dbReference type="Gene3D" id="2.30.29.30">
    <property type="entry name" value="Pleckstrin-homology domain (PH domain)/Phosphotyrosine-binding domain (PTB)"/>
    <property type="match status" value="1"/>
</dbReference>
<dbReference type="InterPro" id="IPR029149">
    <property type="entry name" value="Creatin/AminoP/Spt16_N"/>
</dbReference>
<dbReference type="InterPro" id="IPR036005">
    <property type="entry name" value="Creatinase/aminopeptidase-like"/>
</dbReference>
<dbReference type="InterPro" id="IPR029148">
    <property type="entry name" value="FACT-SPT16_Nlobe"/>
</dbReference>
<dbReference type="InterPro" id="IPR056595">
    <property type="entry name" value="Fact-SPT16_PH"/>
</dbReference>
<dbReference type="InterPro" id="IPR048969">
    <property type="entry name" value="FACT_SPT16_C"/>
</dbReference>
<dbReference type="InterPro" id="IPR013953">
    <property type="entry name" value="FACT_SPT16_M"/>
</dbReference>
<dbReference type="InterPro" id="IPR000994">
    <property type="entry name" value="Pept_M24"/>
</dbReference>
<dbReference type="InterPro" id="IPR011993">
    <property type="entry name" value="PH-like_dom_sf"/>
</dbReference>
<dbReference type="InterPro" id="IPR013719">
    <property type="entry name" value="RTT106/SPT16-like_middle_dom"/>
</dbReference>
<dbReference type="InterPro" id="IPR040258">
    <property type="entry name" value="Spt16"/>
</dbReference>
<dbReference type="InterPro" id="IPR033825">
    <property type="entry name" value="Spt16_M24"/>
</dbReference>
<dbReference type="PANTHER" id="PTHR13980">
    <property type="entry name" value="CDC68 RELATED"/>
    <property type="match status" value="1"/>
</dbReference>
<dbReference type="PANTHER" id="PTHR13980:SF15">
    <property type="entry name" value="FACT COMPLEX SUBUNIT SPT16"/>
    <property type="match status" value="1"/>
</dbReference>
<dbReference type="Pfam" id="PF14826">
    <property type="entry name" value="FACT-Spt16_Nlob"/>
    <property type="match status" value="1"/>
</dbReference>
<dbReference type="Pfam" id="PF00557">
    <property type="entry name" value="Peptidase_M24"/>
    <property type="match status" value="1"/>
</dbReference>
<dbReference type="Pfam" id="PF24824">
    <property type="entry name" value="PH_SPT16"/>
    <property type="match status" value="1"/>
</dbReference>
<dbReference type="Pfam" id="PF08512">
    <property type="entry name" value="Rttp106-like_middle"/>
    <property type="match status" value="1"/>
</dbReference>
<dbReference type="Pfam" id="PF08644">
    <property type="entry name" value="SPT16"/>
    <property type="match status" value="1"/>
</dbReference>
<dbReference type="Pfam" id="PF21091">
    <property type="entry name" value="SPT16_C"/>
    <property type="match status" value="1"/>
</dbReference>
<dbReference type="SMART" id="SM01285">
    <property type="entry name" value="FACT-Spt16_Nlob"/>
    <property type="match status" value="1"/>
</dbReference>
<dbReference type="SMART" id="SM01287">
    <property type="entry name" value="Rtt106"/>
    <property type="match status" value="1"/>
</dbReference>
<dbReference type="SMART" id="SM01286">
    <property type="entry name" value="SPT16"/>
    <property type="match status" value="1"/>
</dbReference>
<dbReference type="SUPFAM" id="SSF55920">
    <property type="entry name" value="Creatinase/aminopeptidase"/>
    <property type="match status" value="1"/>
</dbReference>
<name>SP16H_HUMAN</name>
<protein>
    <recommendedName>
        <fullName>FACT complex subunit SPT16</fullName>
    </recommendedName>
    <alternativeName>
        <fullName>Chromatin-specific transcription elongation factor 140 kDa subunit</fullName>
    </alternativeName>
    <alternativeName>
        <fullName>FACT 140 kDa subunit</fullName>
    </alternativeName>
    <alternativeName>
        <fullName>FACTp140</fullName>
    </alternativeName>
    <alternativeName>
        <fullName>Facilitates chromatin transcription complex subunit SPT16</fullName>
        <shortName>hSPT16</shortName>
    </alternativeName>
</protein>
<feature type="initiator methionine" description="Removed" evidence="17 18 25 26">
    <location>
        <position position="1"/>
    </location>
</feature>
<feature type="chain" id="PRO_0000245169" description="FACT complex subunit SPT16">
    <location>
        <begin position="2"/>
        <end position="1047"/>
    </location>
</feature>
<feature type="region of interest" description="Disordered" evidence="3">
    <location>
        <begin position="492"/>
        <end position="518"/>
    </location>
</feature>
<feature type="region of interest" description="Disordered" evidence="3">
    <location>
        <begin position="918"/>
        <end position="1047"/>
    </location>
</feature>
<feature type="coiled-coil region" evidence="2">
    <location>
        <begin position="432"/>
        <end position="507"/>
    </location>
</feature>
<feature type="compositionally biased region" description="Polar residues" evidence="3">
    <location>
        <begin position="499"/>
        <end position="514"/>
    </location>
</feature>
<feature type="compositionally biased region" description="Acidic residues" evidence="3">
    <location>
        <begin position="927"/>
        <end position="973"/>
    </location>
</feature>
<feature type="compositionally biased region" description="Basic and acidic residues" evidence="3">
    <location>
        <begin position="985"/>
        <end position="1005"/>
    </location>
</feature>
<feature type="compositionally biased region" description="Low complexity" evidence="3">
    <location>
        <begin position="1024"/>
        <end position="1039"/>
    </location>
</feature>
<feature type="modified residue" description="N-acetylalanine" evidence="17 18 25 26">
    <location>
        <position position="2"/>
    </location>
</feature>
<feature type="modified residue" description="N6-acetyllysine" evidence="22">
    <location>
        <position position="139"/>
    </location>
</feature>
<feature type="modified residue" description="Phosphoserine" evidence="24 27">
    <location>
        <position position="188"/>
    </location>
</feature>
<feature type="modified residue" description="N6-acetyllysine" evidence="22">
    <location>
        <position position="196"/>
    </location>
</feature>
<feature type="modified residue" description="N6-acetyllysine" evidence="22">
    <location>
        <position position="223"/>
    </location>
</feature>
<feature type="modified residue" description="Phosphoserine" evidence="27">
    <location>
        <position position="455"/>
    </location>
</feature>
<feature type="modified residue" description="Phosphoserine" evidence="21 27">
    <location>
        <position position="508"/>
    </location>
</feature>
<feature type="modified residue" description="N6-acetyllysine; alternate" evidence="22">
    <location>
        <position position="513"/>
    </location>
</feature>
<feature type="modified residue" description="Phosphoserine" evidence="23 24 27">
    <location>
        <position position="650"/>
    </location>
</feature>
<feature type="modified residue" description="Phosphoserine" evidence="27">
    <location>
        <position position="658"/>
    </location>
</feature>
<feature type="modified residue" description="N6-acetyllysine" evidence="22">
    <location>
        <position position="732"/>
    </location>
</feature>
<feature type="modified residue" description="N6-acetyllysine" evidence="22">
    <location>
        <position position="786"/>
    </location>
</feature>
<feature type="modified residue" description="Phosphothreonine" evidence="23 27">
    <location>
        <position position="903"/>
    </location>
</feature>
<feature type="modified residue" description="N6-acetyllysine" evidence="22">
    <location>
        <position position="904"/>
    </location>
</feature>
<feature type="modified residue" description="Phosphoserine" evidence="20 23 24">
    <location>
        <position position="979"/>
    </location>
</feature>
<feature type="modified residue" description="Phosphoserine" evidence="20 23 24 27">
    <location>
        <position position="982"/>
    </location>
</feature>
<feature type="modified residue" description="Phosphoserine" evidence="24">
    <location>
        <position position="986"/>
    </location>
</feature>
<feature type="modified residue" description="Phosphoserine" evidence="21 27">
    <location>
        <position position="1015"/>
    </location>
</feature>
<feature type="cross-link" description="Glycyl lysine isopeptide (Lys-Gly) (interchain with G-Cter in SUMO2)" evidence="30">
    <location>
        <position position="497"/>
    </location>
</feature>
<feature type="cross-link" description="Glycyl lysine isopeptide (Lys-Gly) (interchain with G-Cter in SUMO2); alternate" evidence="30">
    <location>
        <position position="513"/>
    </location>
</feature>
<feature type="cross-link" description="Glycyl lysine isopeptide (Lys-Gly) (interchain with G-Cter in SUMO2)" evidence="28 29 30">
    <location>
        <position position="647"/>
    </location>
</feature>
<feature type="sequence variant" id="VAR_086185" description="In NEDDFAC; uncertain significance." evidence="14">
    <original>I</original>
    <variation>V</variation>
    <location>
        <position position="162"/>
    </location>
</feature>
<feature type="sequence variant" id="VAR_086186" description="In NEDDFAC; uncertain significance; dbSNP:rs2139403510." evidence="14">
    <original>L</original>
    <variation>P</variation>
    <location>
        <position position="432"/>
    </location>
</feature>
<feature type="sequence variant" id="VAR_086187" description="In NEDDFAC; uncertain significance; dbSNP:rs2139402444." evidence="14">
    <original>N</original>
    <variation>S</variation>
    <location>
        <position position="571"/>
    </location>
</feature>
<feature type="sequence variant" id="VAR_086188" description="In NEDDFAC; uncertain significance; dbSNP:rs2139399670." evidence="14">
    <original>R</original>
    <variation>W</variation>
    <location>
        <position position="734"/>
    </location>
</feature>
<feature type="helix" evidence="33">
    <location>
        <begin position="7"/>
        <end position="23"/>
    </location>
</feature>
<feature type="helix" evidence="33">
    <location>
        <begin position="26"/>
        <end position="28"/>
    </location>
</feature>
<feature type="strand" evidence="33">
    <location>
        <begin position="32"/>
        <end position="38"/>
    </location>
</feature>
<feature type="helix" evidence="33">
    <location>
        <begin position="48"/>
        <end position="57"/>
    </location>
</feature>
<feature type="strand" evidence="33">
    <location>
        <begin position="62"/>
        <end position="68"/>
    </location>
</feature>
<feature type="strand" evidence="33">
    <location>
        <begin position="73"/>
        <end position="77"/>
    </location>
</feature>
<feature type="helix" evidence="33">
    <location>
        <begin position="79"/>
        <end position="89"/>
    </location>
</feature>
<feature type="helix" evidence="33">
    <location>
        <begin position="95"/>
        <end position="99"/>
    </location>
</feature>
<feature type="strand" evidence="33">
    <location>
        <begin position="103"/>
        <end position="107"/>
    </location>
</feature>
<feature type="strand" evidence="33">
    <location>
        <begin position="110"/>
        <end position="112"/>
    </location>
</feature>
<feature type="helix" evidence="33">
    <location>
        <begin position="115"/>
        <end position="127"/>
    </location>
</feature>
<feature type="strand" evidence="33">
    <location>
        <begin position="131"/>
        <end position="136"/>
    </location>
</feature>
<feature type="helix" evidence="33">
    <location>
        <begin position="145"/>
        <end position="155"/>
    </location>
</feature>
<feature type="turn" evidence="34">
    <location>
        <begin position="156"/>
        <end position="158"/>
    </location>
</feature>
<feature type="strand" evidence="33">
    <location>
        <begin position="160"/>
        <end position="163"/>
    </location>
</feature>
<feature type="helix" evidence="33">
    <location>
        <begin position="165"/>
        <end position="173"/>
    </location>
</feature>
<feature type="helix" evidence="33">
    <location>
        <begin position="177"/>
        <end position="196"/>
    </location>
</feature>
<feature type="helix" evidence="33">
    <location>
        <begin position="198"/>
        <end position="207"/>
    </location>
</feature>
<feature type="helix" evidence="33">
    <location>
        <begin position="214"/>
        <end position="224"/>
    </location>
</feature>
<feature type="helix" evidence="33">
    <location>
        <begin position="228"/>
        <end position="230"/>
    </location>
</feature>
<feature type="turn" evidence="33">
    <location>
        <begin position="231"/>
        <end position="233"/>
    </location>
</feature>
<feature type="helix" evidence="33">
    <location>
        <begin position="236"/>
        <end position="238"/>
    </location>
</feature>
<feature type="strand" evidence="33">
    <location>
        <begin position="239"/>
        <end position="243"/>
    </location>
</feature>
<feature type="strand" evidence="33">
    <location>
        <begin position="246"/>
        <end position="248"/>
    </location>
</feature>
<feature type="strand" evidence="33">
    <location>
        <begin position="256"/>
        <end position="259"/>
    </location>
</feature>
<feature type="strand" evidence="33">
    <location>
        <begin position="263"/>
        <end position="265"/>
    </location>
</feature>
<feature type="strand" evidence="33">
    <location>
        <begin position="268"/>
        <end position="275"/>
    </location>
</feature>
<feature type="strand" evidence="33">
    <location>
        <begin position="277"/>
        <end position="279"/>
    </location>
</feature>
<feature type="strand" evidence="33">
    <location>
        <begin position="286"/>
        <end position="293"/>
    </location>
</feature>
<feature type="helix" evidence="33">
    <location>
        <begin position="296"/>
        <end position="315"/>
    </location>
</feature>
<feature type="helix" evidence="33">
    <location>
        <begin position="322"/>
        <end position="336"/>
    </location>
</feature>
<feature type="helix" evidence="33">
    <location>
        <begin position="338"/>
        <end position="340"/>
    </location>
</feature>
<feature type="turn" evidence="33">
    <location>
        <begin position="341"/>
        <end position="343"/>
    </location>
</feature>
<feature type="strand" evidence="33">
    <location>
        <begin position="349"/>
        <end position="351"/>
    </location>
</feature>
<feature type="strand" evidence="33">
    <location>
        <begin position="353"/>
        <end position="356"/>
    </location>
</feature>
<feature type="strand" evidence="33">
    <location>
        <begin position="358"/>
        <end position="362"/>
    </location>
</feature>
<feature type="strand" evidence="34">
    <location>
        <begin position="364"/>
        <end position="366"/>
    </location>
</feature>
<feature type="strand" evidence="33">
    <location>
        <begin position="376"/>
        <end position="387"/>
    </location>
</feature>
<feature type="helix" evidence="33">
    <location>
        <begin position="394"/>
        <end position="397"/>
    </location>
</feature>
<feature type="strand" evidence="33">
    <location>
        <begin position="398"/>
        <end position="408"/>
    </location>
</feature>
<feature type="strand" evidence="33">
    <location>
        <begin position="411"/>
        <end position="414"/>
    </location>
</feature>
<feature type="helix" evidence="33">
    <location>
        <begin position="425"/>
        <end position="428"/>
    </location>
</feature>
<feature type="strand" evidence="32">
    <location>
        <begin position="655"/>
        <end position="657"/>
    </location>
</feature>
<feature type="strand" evidence="35">
    <location>
        <begin position="661"/>
        <end position="669"/>
    </location>
</feature>
<feature type="strand" evidence="35">
    <location>
        <begin position="671"/>
        <end position="674"/>
    </location>
</feature>
<feature type="strand" evidence="35">
    <location>
        <begin position="677"/>
        <end position="682"/>
    </location>
</feature>
<feature type="strand" evidence="35">
    <location>
        <begin position="684"/>
        <end position="691"/>
    </location>
</feature>
<feature type="strand" evidence="35">
    <location>
        <begin position="696"/>
        <end position="700"/>
    </location>
</feature>
<feature type="helix" evidence="35">
    <location>
        <begin position="701"/>
        <end position="703"/>
    </location>
</feature>
<feature type="strand" evidence="35">
    <location>
        <begin position="704"/>
        <end position="710"/>
    </location>
</feature>
<feature type="strand" evidence="35">
    <location>
        <begin position="715"/>
        <end position="730"/>
    </location>
</feature>
<feature type="strand" evidence="35">
    <location>
        <begin position="733"/>
        <end position="743"/>
    </location>
</feature>
<feature type="strand" evidence="31">
    <location>
        <begin position="747"/>
        <end position="749"/>
    </location>
</feature>
<feature type="helix" evidence="35">
    <location>
        <begin position="770"/>
        <end position="790"/>
    </location>
</feature>
<feature type="turn" evidence="32">
    <location>
        <begin position="791"/>
        <end position="793"/>
    </location>
</feature>
<feature type="helix" evidence="35">
    <location>
        <begin position="802"/>
        <end position="804"/>
    </location>
</feature>
<feature type="strand" evidence="35">
    <location>
        <begin position="806"/>
        <end position="813"/>
    </location>
</feature>
<feature type="strand" evidence="35">
    <location>
        <begin position="815"/>
        <end position="819"/>
    </location>
</feature>
<feature type="strand" evidence="35">
    <location>
        <begin position="821"/>
        <end position="826"/>
    </location>
</feature>
<feature type="strand" evidence="35">
    <location>
        <begin position="828"/>
        <end position="831"/>
    </location>
</feature>
<feature type="strand" evidence="35">
    <location>
        <begin position="833"/>
        <end position="836"/>
    </location>
</feature>
<feature type="helix" evidence="35">
    <location>
        <begin position="837"/>
        <end position="839"/>
    </location>
</feature>
<feature type="strand" evidence="35">
    <location>
        <begin position="840"/>
        <end position="847"/>
    </location>
</feature>
<feature type="strand" evidence="35">
    <location>
        <begin position="853"/>
        <end position="863"/>
    </location>
</feature>
<feature type="strand" evidence="35">
    <location>
        <begin position="869"/>
        <end position="875"/>
    </location>
</feature>
<feature type="helix" evidence="35">
    <location>
        <begin position="876"/>
        <end position="878"/>
    </location>
</feature>
<feature type="helix" evidence="35">
    <location>
        <begin position="879"/>
        <end position="888"/>
    </location>
</feature>
<feature type="strand" evidence="35">
    <location>
        <begin position="893"/>
        <end position="895"/>
    </location>
</feature>
<feature type="helix" evidence="35">
    <location>
        <begin position="902"/>
        <end position="911"/>
    </location>
</feature>
<feature type="helix" evidence="35">
    <location>
        <begin position="913"/>
        <end position="918"/>
    </location>
</feature>
<feature type="helix" evidence="35">
    <location>
        <begin position="921"/>
        <end position="925"/>
    </location>
</feature>
<feature type="helix" evidence="36">
    <location>
        <begin position="941"/>
        <end position="944"/>
    </location>
</feature>
<organism>
    <name type="scientific">Homo sapiens</name>
    <name type="common">Human</name>
    <dbReference type="NCBI Taxonomy" id="9606"/>
    <lineage>
        <taxon>Eukaryota</taxon>
        <taxon>Metazoa</taxon>
        <taxon>Chordata</taxon>
        <taxon>Craniata</taxon>
        <taxon>Vertebrata</taxon>
        <taxon>Euteleostomi</taxon>
        <taxon>Mammalia</taxon>
        <taxon>Eutheria</taxon>
        <taxon>Euarchontoglires</taxon>
        <taxon>Primates</taxon>
        <taxon>Haplorrhini</taxon>
        <taxon>Catarrhini</taxon>
        <taxon>Hominidae</taxon>
        <taxon>Homo</taxon>
    </lineage>
</organism>
<sequence length="1047" mass="119914">MAVTLDKDAYYRRVKRLYSNWRKGEDEYANVDAIVVSVGVDEEIVYAKSTALQTWLFGYELTDTIMVFCDDKIIFMASKKKVEFLKQIANTKGNENANGAPAITLLIREKNESNKSSFDKMIEAIKESKNGKKIGVFSKDKFPGEFMKSWNDCLNKEGFDKIDISAVVAYTIAVKEDGELNLMKKAASITSEVFNKFFKERVMEIVDADEKVRHSKLAESVEKAIEEKKYLAGADPSTVEMCYPPIIQSGGNYNLKFSVVSDKNHMHFGAITCAMGIRFKSYCSNLVRTLMVDPSQEVQENYNFLLQLQEELLKELRHGVKICDVYNAVMDVVKKQKPELLNKITKNLGFGMGIEFREGSLVINSKNQYKLKKGMVFSINLGFSDLTNKEGKKPEEKTYALFIGDTVLVDEDGPATVLTSVKKKVKNVGIFLKNEDEEEEEEEKDEAEDLLGRGSRAALLTERTRNEMTAEEKRRAHQKELAAQLNEEAKRRLTEQKGEQQIQKARKSNVSYKNPSLMPKEPHIREMKIYIDKKYETVIMPVFGIATPFHIATIKNISMSVEGDYTYLRINFYCPGSALGRNEGNIFPNPEATFVKEITYRASNIKAPGEQTVPALNLQNAFRIIKEVQKRYKTREAEEKEKEGIVKQDSLVINLNRSNPKLKDLYIRPNIAQKRMQGSLEAHVNGFRFTSVRGDKVDILYNNIKHALFQPCDGEMIIVLHFHLKNAIMFGKKRHTDVQFYTEVGEITTDLGKHQHMHDRDDLYAEQMEREMRHKLKTAFKNFIEKVEALTKEELEFEVPFRDLGFNGAPYRSTCLLQPTSSALVNATEWPPFVVTLDEVELIHFERVQFHLKNFDMVIVYKDYSKKVTMINAIPVASLDPIKEWLNSCDLKYTEGVQSLNWTKIMKTIVDDPEGFFEQGGWSFLEPEGEGSDAEEGDSESEIEDETFNPSEDDYEEEEEDSDEDYSSEAEESDYSKESLGSEEESGKDWDELEEEARKADRESRYEEEEEQSRSMSRKRKASVHSSGRGSNRGSRHSSAPPKKKRK</sequence>
<comment type="function">
    <text evidence="6 7 9 11 15 16">Component of the FACT complex, a general chromatin factor that acts to reorganize nucleosomes. The FACT complex is involved in multiple processes that require DNA as a template such as mRNA elongation, DNA replication and DNA repair. During transcription elongation the FACT complex acts as a histone chaperone that both destabilizes and restores nucleosomal structure. It facilitates the passage of RNA polymerase II and transcription by promoting the dissociation of one histone H2A-H2B dimer from the nucleosome, then subsequently promotes the reestablishment of the nucleosome following the passage of RNA polymerase II. The FACT complex is probably also involved in phosphorylation of 'Ser-392' of p53/TP53 via its association with CK2 (casein kinase II).</text>
</comment>
<comment type="subunit">
    <text evidence="1 4 5 7 8 10 12">Interacts with MYOG (via C-terminal region) (By similarity). Component of the FACT complex, a stable heterodimer of SSRP1 and SUPT16H (PubMed:10421373). Also a component of a CK2-SPT16-SSRP1 complex which forms following UV irradiation, composed of SSRP1, SUPT16H, CSNK2A1, CSNK2A2 and CSNK2B (PubMed:11239457, PubMed:12393879). Interacts with NEK9 (PubMed:14660563). Binds to histone H2A-H2B (PubMed:10421373). Identified in a centromere complex containing histones H2A, H2B and H4, and at least CENPA, CENPB, CENPC, CENPT, CENPN, HJURP, SUPT16H, SSRP1 and RSF1 (PubMed:27499292). Interacts with GTF2E2 (PubMed:10792464).</text>
</comment>
<comment type="subunit">
    <text evidence="13">(Microbial infection) Interacts with Herpes simplex virus 1 (HHV-1) protein ICP22; this interaction relocalizes the FACT complex to viral genomes in infected cells.</text>
</comment>
<comment type="interaction">
    <interactant intactId="EBI-1046849">
        <id>Q9Y5B9</id>
    </interactant>
    <interactant intactId="EBI-77613">
        <id>P05067</id>
        <label>APP</label>
    </interactant>
    <organismsDiffer>false</organismsDiffer>
    <experiments>3</experiments>
</comment>
<comment type="interaction">
    <interactant intactId="EBI-1046849">
        <id>Q9Y5B9</id>
    </interactant>
    <interactant intactId="EBI-374938">
        <id>P33991</id>
        <label>MCM4</label>
    </interactant>
    <organismsDiffer>false</organismsDiffer>
    <experiments>3</experiments>
</comment>
<comment type="interaction">
    <interactant intactId="EBI-1046849">
        <id>Q9Y5B9</id>
    </interactant>
    <interactant intactId="EBI-353771">
        <id>Q08945</id>
        <label>SSRP1</label>
    </interactant>
    <organismsDiffer>false</organismsDiffer>
    <experiments>10</experiments>
</comment>
<comment type="subcellular location">
    <subcellularLocation>
        <location evidence="4">Nucleus</location>
    </subcellularLocation>
    <subcellularLocation>
        <location evidence="4">Chromosome</location>
    </subcellularLocation>
    <text>Colocalizes with RNA polymerase II on chromatin. Recruited to actively transcribed loci.</text>
</comment>
<comment type="tissue specificity">
    <text evidence="5">Ubiquitous.</text>
</comment>
<comment type="domain">
    <text evidence="9">The C-terminal Glu-rich acidic region is essential for FACT activity.</text>
</comment>
<comment type="PTM">
    <text>ADP-ribosylated. ADP-ribosylation by PARP1 is induced by genotoxic stress and correlates with dissociation of FACT from chromatin.</text>
</comment>
<comment type="disease" evidence="14">
    <disease id="DI-06198">
        <name>Neurodevelopmental disorder with dysmorphic facies and thin corpus callosum</name>
        <acronym>NEDDFAC</acronym>
        <description>An autosomal dominant disorder characterized by global developmental delay, impaired intellectual development with poor or absent speech and language, and autistic-like behaviors. Corpus callosum anomalies are visible on brain imaging. Most patients have dysmorphic features including tall forehead, down-slanting palpebral fissures, ear anomalies and broad nasal bridge. Other variably present clinical features include seizures, sleeping difficulties and precocious puberty.</description>
        <dbReference type="MIM" id="619480"/>
    </disease>
    <text>The disease may be caused by variants affecting the gene represented in this entry.</text>
</comment>
<comment type="similarity">
    <text evidence="19">Belongs to the peptidase M24 family. SPT16 subfamily.</text>
</comment>
<comment type="caution">
    <text evidence="19">Although related to the peptidase M24 family, this protein lacks conserved active site residues suggesting that it may lack peptidase activity.</text>
</comment>
<comment type="sequence caution" evidence="19">
    <conflict type="miscellaneous discrepancy">
        <sequence resource="EMBL-CDS" id="AAH64561"/>
    </conflict>
    <text>Contaminating sequence. Potential poly-A sequence.</text>
</comment>
<comment type="sequence caution" evidence="19">
    <conflict type="miscellaneous discrepancy">
        <sequence resource="EMBL-CDS" id="AAH73849"/>
    </conflict>
    <text>Contaminating sequence. Potential poly-A sequence.</text>
</comment>